<protein>
    <recommendedName>
        <fullName evidence="6">Short-chain dehydrogenase/reductase bsc3</fullName>
        <ecNumber evidence="9">1.-.-.-</ecNumber>
    </recommendedName>
    <alternativeName>
        <fullName evidence="6">Brassicicene C biosynthetic gene cluster protein 3</fullName>
    </alternativeName>
</protein>
<reference key="1">
    <citation type="journal article" date="2011" name="J. Am. Chem. Soc.">
        <title>Dioxygenases, key enzymes to determine the aglycon structures of fusicoccin and brassicicene, diterpene compounds produced by fungi.</title>
        <authorList>
            <person name="Ono Y."/>
            <person name="Minami A."/>
            <person name="Noike M."/>
            <person name="Higuchi Y."/>
            <person name="Toyomasu T."/>
            <person name="Sassa T."/>
            <person name="Kato N."/>
            <person name="Dairi T."/>
        </authorList>
    </citation>
    <scope>NUCLEOTIDE SEQUENCE [MRNA]</scope>
    <scope>FUNCTION</scope>
</reference>
<reference key="2">
    <citation type="journal article" date="2009" name="Bioorg. Med. Chem. Lett.">
        <title>Identification and functional analysis of brassicicene C biosynthetic gene cluster in Alternaria brassicicola.</title>
        <authorList>
            <person name="Minami A."/>
            <person name="Tajima N."/>
            <person name="Higuchi Y."/>
            <person name="Toyomasu T."/>
            <person name="Sassa T."/>
            <person name="Kato N."/>
            <person name="Dairi T."/>
        </authorList>
    </citation>
    <scope>FUNCTION</scope>
    <scope>PATHWAY</scope>
</reference>
<reference key="3">
    <citation type="journal article" date="2009" name="Bioorg. Med. Chem. Lett.">
        <title>Functional analyses of cytochrome P450 genes responsible for the early steps of brassicicene C biosynthesis.</title>
        <authorList>
            <person name="Hashimoto M."/>
            <person name="Higuchi Y."/>
            <person name="Takahashi S."/>
            <person name="Osada H."/>
            <person name="Sakaki T."/>
            <person name="Toyomasu T."/>
            <person name="Sassa T."/>
            <person name="Kato N."/>
            <person name="Dairi T."/>
        </authorList>
    </citation>
    <scope>FUNCTION</scope>
</reference>
<organism>
    <name type="scientific">Alternaria brassicicola</name>
    <name type="common">Dark leaf spot agent</name>
    <dbReference type="NCBI Taxonomy" id="29001"/>
    <lineage>
        <taxon>Eukaryota</taxon>
        <taxon>Fungi</taxon>
        <taxon>Dikarya</taxon>
        <taxon>Ascomycota</taxon>
        <taxon>Pezizomycotina</taxon>
        <taxon>Dothideomycetes</taxon>
        <taxon>Pleosporomycetidae</taxon>
        <taxon>Pleosporales</taxon>
        <taxon>Pleosporineae</taxon>
        <taxon>Pleosporaceae</taxon>
        <taxon>Alternaria</taxon>
        <taxon>Alternaria sect. Brassicicola</taxon>
    </lineage>
</organism>
<sequence length="274" mass="28830">MSQSTLVIIGAGGIGEAIARRVGPGKEVLLGDWSNALLQEATQRMKRDGFRVTSQHVNISSHDSVIQFAEKAQSLGQVMHVVISAGLSPVSSTRETILAVNLAGTGFCIAEFGKLIGHGGTCVVISSLAGYTLAQDVPHGVIQHLARTSPSDVLGLPLLRETVLDQWSAYGVSKRVNYVQVQDASLSWARRGARINSISPGAIQTPMLSLESQASKEEVVHDLAQNVPCKRVGDSGEVAHVAAFLLGSESSFVTGTDILVDGGALAYLSRDTSS</sequence>
<gene>
    <name evidence="8" type="primary">bsc3</name>
    <name evidence="7" type="synonym">bc-sdr</name>
    <name evidence="6" type="synonym">orf3</name>
</gene>
<keyword id="KW-0521">NADP</keyword>
<keyword id="KW-0560">Oxidoreductase</keyword>
<proteinExistence type="evidence at transcript level"/>
<comment type="function">
    <text evidence="3 4 5 9">Short-chain dehydrogenase/reductase; part of the gene cluster that mediates the biosynthesis of the diterpene glucoside brassicicene C (PubMed:19097780). In the first step of the brassicicene C biosynthesis, the bifunctional diterpene synthase bsc8 that possesses both prenyl transferase and terpene cyclase activity, converts isopentenyl diphosphate and dimethylallyl diphosphate into geranylgeranyl diphosphate (GGDP) that is further converted into fusicocca-2,10(14)-diene, the first precursor for brassicicene C (PubMed:19097780). Fusicocca-2,10(14)-diene is then substrate of cytochrome P450 monooxygenase bsc1 for hydroxylation at the C-8 position (PubMed:19700326). Oxidation at C-16 position to aldehyde is then catalyzed by the cytochrome P450 monooyxygenase bsc7, yielding fusicocca-2,10(14)-diene-8-beta,16-diol (PubMed:19700326). Follows the isomerization of the double bond and reduction of aldehyde to alcohol catalyzed by the short-chain dehydrogenase/reductase bsc3 to yield the diol compound fusicocca-1,10(14)-diene-8 beta,16-diol (Probable). The next step is the oxidation at the C-3 position of fusicocca-2,10(14)-diene-8-beta,16-diol catalyzed by the alpha-ketoglutarate dependent dioxygenase bsc9, to produce a triol compound (PubMed:21299202). Methylation of the hydroxy group at position 16 is performed by the methyltransferase bsc6 (PubMed:19097780). 16-O-methylation is followed by oxidation at the C-13 position to ketone and an alkyl shift of the methyl group leads to brassicicene C (Probable). Although the probable acetyltransferase bsc4 is included in the gene cluster, no acetylation reactions are necessary for brassicicene C biosynthesis. However, the fact that brassicicene E, which is a structurally related compound having an acetoxy group at position 12, was previously isolated from another strain of A.brassicicola suggests that the ATCC 96836 strain might also produce a small amount of brassicicene E (Probable).</text>
</comment>
<comment type="pathway">
    <text evidence="9">Mycotoxin biosynthesis.</text>
</comment>
<comment type="similarity">
    <text evidence="8">Belongs to the short-chain dehydrogenases/reductases (SDR) family.</text>
</comment>
<feature type="chain" id="PRO_0000445462" description="Short-chain dehydrogenase/reductase bsc3">
    <location>
        <begin position="1"/>
        <end position="274"/>
    </location>
</feature>
<feature type="active site" description="Proton donor" evidence="2">
    <location>
        <position position="170"/>
    </location>
</feature>
<feature type="active site" description="Lowers pKa of active site Tyr" evidence="2">
    <location>
        <position position="174"/>
    </location>
</feature>
<feature type="binding site" evidence="1">
    <location>
        <position position="14"/>
    </location>
    <ligand>
        <name>NADP(+)</name>
        <dbReference type="ChEBI" id="CHEBI:58349"/>
    </ligand>
</feature>
<feature type="binding site" evidence="2">
    <location>
        <position position="170"/>
    </location>
    <ligand>
        <name>NADP(+)</name>
        <dbReference type="ChEBI" id="CHEBI:58349"/>
    </ligand>
</feature>
<feature type="binding site" evidence="2">
    <location>
        <position position="174"/>
    </location>
    <ligand>
        <name>NADP(+)</name>
        <dbReference type="ChEBI" id="CHEBI:58349"/>
    </ligand>
</feature>
<feature type="binding site" evidence="2">
    <location>
        <position position="203"/>
    </location>
    <ligand>
        <name>NADP(+)</name>
        <dbReference type="ChEBI" id="CHEBI:58349"/>
    </ligand>
</feature>
<feature type="binding site" evidence="1">
    <location>
        <position position="205"/>
    </location>
    <ligand>
        <name>NADP(+)</name>
        <dbReference type="ChEBI" id="CHEBI:58349"/>
    </ligand>
</feature>
<name>BSC3_ALTBR</name>
<evidence type="ECO:0000250" key="1">
    <source>
        <dbReference type="UniProtKB" id="L0E2Z4"/>
    </source>
</evidence>
<evidence type="ECO:0000250" key="2">
    <source>
        <dbReference type="UniProtKB" id="O93868"/>
    </source>
</evidence>
<evidence type="ECO:0000269" key="3">
    <source>
    </source>
</evidence>
<evidence type="ECO:0000269" key="4">
    <source>
    </source>
</evidence>
<evidence type="ECO:0000269" key="5">
    <source>
    </source>
</evidence>
<evidence type="ECO:0000303" key="6">
    <source>
    </source>
</evidence>
<evidence type="ECO:0000303" key="7">
    <source>
    </source>
</evidence>
<evidence type="ECO:0000305" key="8"/>
<evidence type="ECO:0000305" key="9">
    <source>
    </source>
</evidence>
<accession>E0D7H5</accession>
<dbReference type="EC" id="1.-.-.-" evidence="9"/>
<dbReference type="EMBL" id="AB570249">
    <property type="protein sequence ID" value="BAJ15868.1"/>
    <property type="molecule type" value="mRNA"/>
</dbReference>
<dbReference type="SMR" id="E0D7H5"/>
<dbReference type="GO" id="GO:0016491">
    <property type="term" value="F:oxidoreductase activity"/>
    <property type="evidence" value="ECO:0007669"/>
    <property type="project" value="UniProtKB-KW"/>
</dbReference>
<dbReference type="CDD" id="cd05233">
    <property type="entry name" value="SDR_c"/>
    <property type="match status" value="1"/>
</dbReference>
<dbReference type="Gene3D" id="3.40.50.720">
    <property type="entry name" value="NAD(P)-binding Rossmann-like Domain"/>
    <property type="match status" value="1"/>
</dbReference>
<dbReference type="InterPro" id="IPR036291">
    <property type="entry name" value="NAD(P)-bd_dom_sf"/>
</dbReference>
<dbReference type="InterPro" id="IPR002347">
    <property type="entry name" value="SDR_fam"/>
</dbReference>
<dbReference type="PANTHER" id="PTHR24321">
    <property type="entry name" value="DEHYDROGENASES, SHORT CHAIN"/>
    <property type="match status" value="1"/>
</dbReference>
<dbReference type="PANTHER" id="PTHR24321:SF8">
    <property type="entry name" value="ESTRADIOL 17-BETA-DEHYDROGENASE 8-RELATED"/>
    <property type="match status" value="1"/>
</dbReference>
<dbReference type="Pfam" id="PF00106">
    <property type="entry name" value="adh_short"/>
    <property type="match status" value="1"/>
</dbReference>
<dbReference type="Pfam" id="PF13561">
    <property type="entry name" value="adh_short_C2"/>
    <property type="match status" value="1"/>
</dbReference>
<dbReference type="PRINTS" id="PR00081">
    <property type="entry name" value="GDHRDH"/>
</dbReference>
<dbReference type="SUPFAM" id="SSF51735">
    <property type="entry name" value="NAD(P)-binding Rossmann-fold domains"/>
    <property type="match status" value="1"/>
</dbReference>